<name>PYRD_PHOLL</name>
<organism>
    <name type="scientific">Photorhabdus laumondii subsp. laumondii (strain DSM 15139 / CIP 105565 / TT01)</name>
    <name type="common">Photorhabdus luminescens subsp. laumondii</name>
    <dbReference type="NCBI Taxonomy" id="243265"/>
    <lineage>
        <taxon>Bacteria</taxon>
        <taxon>Pseudomonadati</taxon>
        <taxon>Pseudomonadota</taxon>
        <taxon>Gammaproteobacteria</taxon>
        <taxon>Enterobacterales</taxon>
        <taxon>Morganellaceae</taxon>
        <taxon>Photorhabdus</taxon>
    </lineage>
</organism>
<protein>
    <recommendedName>
        <fullName evidence="1">Dihydroorotate dehydrogenase (quinone)</fullName>
        <ecNumber evidence="1">1.3.5.2</ecNumber>
    </recommendedName>
    <alternativeName>
        <fullName evidence="1">DHOdehase</fullName>
        <shortName evidence="1">DHOD</shortName>
        <shortName evidence="1">DHODase</shortName>
    </alternativeName>
    <alternativeName>
        <fullName evidence="1">Dihydroorotate oxidase</fullName>
    </alternativeName>
</protein>
<dbReference type="EC" id="1.3.5.2" evidence="1"/>
<dbReference type="EMBL" id="BX571865">
    <property type="protein sequence ID" value="CAE14051.1"/>
    <property type="molecule type" value="Genomic_DNA"/>
</dbReference>
<dbReference type="RefSeq" id="WP_011146037.1">
    <property type="nucleotide sequence ID" value="NC_005126.1"/>
</dbReference>
<dbReference type="SMR" id="Q7N617"/>
<dbReference type="STRING" id="243265.plu1758"/>
<dbReference type="GeneID" id="48848039"/>
<dbReference type="KEGG" id="plu:plu1758"/>
<dbReference type="eggNOG" id="COG0167">
    <property type="taxonomic scope" value="Bacteria"/>
</dbReference>
<dbReference type="HOGENOM" id="CLU_013640_2_0_6"/>
<dbReference type="OrthoDB" id="9802377at2"/>
<dbReference type="UniPathway" id="UPA00070">
    <property type="reaction ID" value="UER00946"/>
</dbReference>
<dbReference type="Proteomes" id="UP000002514">
    <property type="component" value="Chromosome"/>
</dbReference>
<dbReference type="GO" id="GO:0005737">
    <property type="term" value="C:cytoplasm"/>
    <property type="evidence" value="ECO:0007669"/>
    <property type="project" value="InterPro"/>
</dbReference>
<dbReference type="GO" id="GO:0005886">
    <property type="term" value="C:plasma membrane"/>
    <property type="evidence" value="ECO:0007669"/>
    <property type="project" value="UniProtKB-SubCell"/>
</dbReference>
<dbReference type="GO" id="GO:0106430">
    <property type="term" value="F:dihydroorotate dehydrogenase (quinone) activity"/>
    <property type="evidence" value="ECO:0007669"/>
    <property type="project" value="UniProtKB-EC"/>
</dbReference>
<dbReference type="GO" id="GO:0006207">
    <property type="term" value="P:'de novo' pyrimidine nucleobase biosynthetic process"/>
    <property type="evidence" value="ECO:0007669"/>
    <property type="project" value="InterPro"/>
</dbReference>
<dbReference type="GO" id="GO:0044205">
    <property type="term" value="P:'de novo' UMP biosynthetic process"/>
    <property type="evidence" value="ECO:0007669"/>
    <property type="project" value="UniProtKB-UniRule"/>
</dbReference>
<dbReference type="CDD" id="cd04738">
    <property type="entry name" value="DHOD_2_like"/>
    <property type="match status" value="1"/>
</dbReference>
<dbReference type="FunFam" id="3.20.20.70:FF:000028">
    <property type="entry name" value="Dihydroorotate dehydrogenase (quinone)"/>
    <property type="match status" value="1"/>
</dbReference>
<dbReference type="Gene3D" id="3.20.20.70">
    <property type="entry name" value="Aldolase class I"/>
    <property type="match status" value="1"/>
</dbReference>
<dbReference type="HAMAP" id="MF_00225">
    <property type="entry name" value="DHO_dh_type2"/>
    <property type="match status" value="1"/>
</dbReference>
<dbReference type="InterPro" id="IPR013785">
    <property type="entry name" value="Aldolase_TIM"/>
</dbReference>
<dbReference type="InterPro" id="IPR050074">
    <property type="entry name" value="DHO_dehydrogenase"/>
</dbReference>
<dbReference type="InterPro" id="IPR012135">
    <property type="entry name" value="Dihydroorotate_DH_1_2"/>
</dbReference>
<dbReference type="InterPro" id="IPR005719">
    <property type="entry name" value="Dihydroorotate_DH_2"/>
</dbReference>
<dbReference type="InterPro" id="IPR005720">
    <property type="entry name" value="Dihydroorotate_DH_cat"/>
</dbReference>
<dbReference type="InterPro" id="IPR001295">
    <property type="entry name" value="Dihydroorotate_DH_CS"/>
</dbReference>
<dbReference type="NCBIfam" id="NF003644">
    <property type="entry name" value="PRK05286.1-1"/>
    <property type="match status" value="1"/>
</dbReference>
<dbReference type="NCBIfam" id="NF003645">
    <property type="entry name" value="PRK05286.1-2"/>
    <property type="match status" value="1"/>
</dbReference>
<dbReference type="NCBIfam" id="NF003646">
    <property type="entry name" value="PRK05286.1-4"/>
    <property type="match status" value="1"/>
</dbReference>
<dbReference type="NCBIfam" id="NF003652">
    <property type="entry name" value="PRK05286.2-5"/>
    <property type="match status" value="1"/>
</dbReference>
<dbReference type="NCBIfam" id="TIGR01036">
    <property type="entry name" value="pyrD_sub2"/>
    <property type="match status" value="1"/>
</dbReference>
<dbReference type="PANTHER" id="PTHR48109:SF4">
    <property type="entry name" value="DIHYDROOROTATE DEHYDROGENASE (QUINONE), MITOCHONDRIAL"/>
    <property type="match status" value="1"/>
</dbReference>
<dbReference type="PANTHER" id="PTHR48109">
    <property type="entry name" value="DIHYDROOROTATE DEHYDROGENASE (QUINONE), MITOCHONDRIAL-RELATED"/>
    <property type="match status" value="1"/>
</dbReference>
<dbReference type="Pfam" id="PF01180">
    <property type="entry name" value="DHO_dh"/>
    <property type="match status" value="1"/>
</dbReference>
<dbReference type="PIRSF" id="PIRSF000164">
    <property type="entry name" value="DHO_oxidase"/>
    <property type="match status" value="1"/>
</dbReference>
<dbReference type="SUPFAM" id="SSF51395">
    <property type="entry name" value="FMN-linked oxidoreductases"/>
    <property type="match status" value="1"/>
</dbReference>
<dbReference type="PROSITE" id="PS00911">
    <property type="entry name" value="DHODEHASE_1"/>
    <property type="match status" value="1"/>
</dbReference>
<dbReference type="PROSITE" id="PS00912">
    <property type="entry name" value="DHODEHASE_2"/>
    <property type="match status" value="1"/>
</dbReference>
<gene>
    <name evidence="1" type="primary">pyrD</name>
    <name type="ordered locus">plu1758</name>
</gene>
<accession>Q7N617</accession>
<feature type="chain" id="PRO_0000148464" description="Dihydroorotate dehydrogenase (quinone)">
    <location>
        <begin position="1"/>
        <end position="336"/>
    </location>
</feature>
<feature type="active site" description="Nucleophile" evidence="1">
    <location>
        <position position="175"/>
    </location>
</feature>
<feature type="binding site" evidence="1">
    <location>
        <begin position="62"/>
        <end position="66"/>
    </location>
    <ligand>
        <name>FMN</name>
        <dbReference type="ChEBI" id="CHEBI:58210"/>
    </ligand>
</feature>
<feature type="binding site" evidence="1">
    <location>
        <position position="66"/>
    </location>
    <ligand>
        <name>substrate</name>
    </ligand>
</feature>
<feature type="binding site" evidence="1">
    <location>
        <position position="86"/>
    </location>
    <ligand>
        <name>FMN</name>
        <dbReference type="ChEBI" id="CHEBI:58210"/>
    </ligand>
</feature>
<feature type="binding site" evidence="1">
    <location>
        <begin position="111"/>
        <end position="115"/>
    </location>
    <ligand>
        <name>substrate</name>
    </ligand>
</feature>
<feature type="binding site" evidence="1">
    <location>
        <position position="139"/>
    </location>
    <ligand>
        <name>FMN</name>
        <dbReference type="ChEBI" id="CHEBI:58210"/>
    </ligand>
</feature>
<feature type="binding site" evidence="1">
    <location>
        <position position="172"/>
    </location>
    <ligand>
        <name>FMN</name>
        <dbReference type="ChEBI" id="CHEBI:58210"/>
    </ligand>
</feature>
<feature type="binding site" evidence="1">
    <location>
        <position position="172"/>
    </location>
    <ligand>
        <name>substrate</name>
    </ligand>
</feature>
<feature type="binding site" evidence="1">
    <location>
        <position position="177"/>
    </location>
    <ligand>
        <name>substrate</name>
    </ligand>
</feature>
<feature type="binding site" evidence="1">
    <location>
        <position position="217"/>
    </location>
    <ligand>
        <name>FMN</name>
        <dbReference type="ChEBI" id="CHEBI:58210"/>
    </ligand>
</feature>
<feature type="binding site" evidence="1">
    <location>
        <position position="245"/>
    </location>
    <ligand>
        <name>FMN</name>
        <dbReference type="ChEBI" id="CHEBI:58210"/>
    </ligand>
</feature>
<feature type="binding site" evidence="1">
    <location>
        <begin position="246"/>
        <end position="247"/>
    </location>
    <ligand>
        <name>substrate</name>
    </ligand>
</feature>
<feature type="binding site" evidence="1">
    <location>
        <position position="268"/>
    </location>
    <ligand>
        <name>FMN</name>
        <dbReference type="ChEBI" id="CHEBI:58210"/>
    </ligand>
</feature>
<feature type="binding site" evidence="1">
    <location>
        <position position="297"/>
    </location>
    <ligand>
        <name>FMN</name>
        <dbReference type="ChEBI" id="CHEBI:58210"/>
    </ligand>
</feature>
<feature type="binding site" evidence="1">
    <location>
        <begin position="318"/>
        <end position="319"/>
    </location>
    <ligand>
        <name>FMN</name>
        <dbReference type="ChEBI" id="CHEBI:58210"/>
    </ligand>
</feature>
<reference key="1">
    <citation type="journal article" date="2003" name="Nat. Biotechnol.">
        <title>The genome sequence of the entomopathogenic bacterium Photorhabdus luminescens.</title>
        <authorList>
            <person name="Duchaud E."/>
            <person name="Rusniok C."/>
            <person name="Frangeul L."/>
            <person name="Buchrieser C."/>
            <person name="Givaudan A."/>
            <person name="Taourit S."/>
            <person name="Bocs S."/>
            <person name="Boursaux-Eude C."/>
            <person name="Chandler M."/>
            <person name="Charles J.-F."/>
            <person name="Dassa E."/>
            <person name="Derose R."/>
            <person name="Derzelle S."/>
            <person name="Freyssinet G."/>
            <person name="Gaudriault S."/>
            <person name="Medigue C."/>
            <person name="Lanois A."/>
            <person name="Powell K."/>
            <person name="Siguier P."/>
            <person name="Vincent R."/>
            <person name="Wingate V."/>
            <person name="Zouine M."/>
            <person name="Glaser P."/>
            <person name="Boemare N."/>
            <person name="Danchin A."/>
            <person name="Kunst F."/>
        </authorList>
    </citation>
    <scope>NUCLEOTIDE SEQUENCE [LARGE SCALE GENOMIC DNA]</scope>
    <source>
        <strain>DSM 15139 / CIP 105565 / TT01</strain>
    </source>
</reference>
<evidence type="ECO:0000255" key="1">
    <source>
        <dbReference type="HAMAP-Rule" id="MF_00225"/>
    </source>
</evidence>
<comment type="function">
    <text evidence="1">Catalyzes the conversion of dihydroorotate to orotate with quinone as electron acceptor.</text>
</comment>
<comment type="catalytic activity">
    <reaction evidence="1">
        <text>(S)-dihydroorotate + a quinone = orotate + a quinol</text>
        <dbReference type="Rhea" id="RHEA:30187"/>
        <dbReference type="ChEBI" id="CHEBI:24646"/>
        <dbReference type="ChEBI" id="CHEBI:30839"/>
        <dbReference type="ChEBI" id="CHEBI:30864"/>
        <dbReference type="ChEBI" id="CHEBI:132124"/>
        <dbReference type="EC" id="1.3.5.2"/>
    </reaction>
</comment>
<comment type="cofactor">
    <cofactor evidence="1">
        <name>FMN</name>
        <dbReference type="ChEBI" id="CHEBI:58210"/>
    </cofactor>
    <text evidence="1">Binds 1 FMN per subunit.</text>
</comment>
<comment type="pathway">
    <text evidence="1">Pyrimidine metabolism; UMP biosynthesis via de novo pathway; orotate from (S)-dihydroorotate (quinone route): step 1/1.</text>
</comment>
<comment type="subunit">
    <text evidence="1">Monomer.</text>
</comment>
<comment type="subcellular location">
    <subcellularLocation>
        <location evidence="1">Cell membrane</location>
        <topology evidence="1">Peripheral membrane protein</topology>
    </subcellularLocation>
</comment>
<comment type="similarity">
    <text evidence="1">Belongs to the dihydroorotate dehydrogenase family. Type 2 subfamily.</text>
</comment>
<sequence>MCYPLARKALFQLDPEHAHELTFRQLKRITGTPFEFFIRQSIATKPVTCMGLSFKNPLGLAAGLDKDGDCIDAFGAMGFGFIEIGTVTPRAQAGNDKPRLFRIVEAEGLINRMGFNNLGVDNLVENVKKAKYGGVIGINIGKNKDTPVEHGKDDYLICMDKIYPHAGYITINISSPNTPGLRTLQYGEALDDLLSAIKNKQGELQQKYQKYVPVAVKIAPDLSEEELIQIADSLIRHNIDGAIATNTTLDKRLVEGLNYCQQAGGLSGRPVQLRSTEVIRQLSQELRDKIPIIGVGGIDSLTAAREKIAAGASLIQIFSGFIYHGPKLIKDIVNHI</sequence>
<keyword id="KW-1003">Cell membrane</keyword>
<keyword id="KW-0285">Flavoprotein</keyword>
<keyword id="KW-0288">FMN</keyword>
<keyword id="KW-0472">Membrane</keyword>
<keyword id="KW-0560">Oxidoreductase</keyword>
<keyword id="KW-0665">Pyrimidine biosynthesis</keyword>
<keyword id="KW-1185">Reference proteome</keyword>
<proteinExistence type="inferred from homology"/>